<feature type="chain" id="PRO_0000140305" description="Peptide methionine sulfoxide reductase MsrB">
    <location>
        <begin position="1"/>
        <end position="144"/>
    </location>
</feature>
<feature type="domain" description="MsrB" evidence="2">
    <location>
        <begin position="5"/>
        <end position="128"/>
    </location>
</feature>
<feature type="active site" description="Nucleophile" evidence="2">
    <location>
        <position position="117"/>
    </location>
</feature>
<reference key="1">
    <citation type="journal article" date="2002" name="Mol. Microbiol.">
        <title>Genome sequence of Streptococcus agalactiae, a pathogen causing invasive neonatal disease.</title>
        <authorList>
            <person name="Glaser P."/>
            <person name="Rusniok C."/>
            <person name="Buchrieser C."/>
            <person name="Chevalier F."/>
            <person name="Frangeul L."/>
            <person name="Msadek T."/>
            <person name="Zouine M."/>
            <person name="Couve E."/>
            <person name="Lalioui L."/>
            <person name="Poyart C."/>
            <person name="Trieu-Cuot P."/>
            <person name="Kunst F."/>
        </authorList>
    </citation>
    <scope>NUCLEOTIDE SEQUENCE [LARGE SCALE GENOMIC DNA]</scope>
    <source>
        <strain>NEM316</strain>
    </source>
</reference>
<accession>Q8E5Q9</accession>
<dbReference type="EC" id="1.8.4.12" evidence="1"/>
<dbReference type="EMBL" id="AL766848">
    <property type="protein sequence ID" value="CAD46580.1"/>
    <property type="molecule type" value="Genomic_DNA"/>
</dbReference>
<dbReference type="RefSeq" id="WP_000665410.1">
    <property type="nucleotide sequence ID" value="NC_004368.1"/>
</dbReference>
<dbReference type="SMR" id="Q8E5Q9"/>
<dbReference type="KEGG" id="san:gbs0921"/>
<dbReference type="eggNOG" id="COG0229">
    <property type="taxonomic scope" value="Bacteria"/>
</dbReference>
<dbReference type="HOGENOM" id="CLU_031040_8_5_9"/>
<dbReference type="Proteomes" id="UP000000823">
    <property type="component" value="Chromosome"/>
</dbReference>
<dbReference type="GO" id="GO:0005737">
    <property type="term" value="C:cytoplasm"/>
    <property type="evidence" value="ECO:0007669"/>
    <property type="project" value="TreeGrafter"/>
</dbReference>
<dbReference type="GO" id="GO:0033743">
    <property type="term" value="F:peptide-methionine (R)-S-oxide reductase activity"/>
    <property type="evidence" value="ECO:0007669"/>
    <property type="project" value="UniProtKB-UniRule"/>
</dbReference>
<dbReference type="GO" id="GO:0030091">
    <property type="term" value="P:protein repair"/>
    <property type="evidence" value="ECO:0007669"/>
    <property type="project" value="InterPro"/>
</dbReference>
<dbReference type="GO" id="GO:0006979">
    <property type="term" value="P:response to oxidative stress"/>
    <property type="evidence" value="ECO:0007669"/>
    <property type="project" value="InterPro"/>
</dbReference>
<dbReference type="FunFam" id="2.170.150.20:FF:000003">
    <property type="entry name" value="Peptide methionine sulfoxide reductase MsrB"/>
    <property type="match status" value="1"/>
</dbReference>
<dbReference type="Gene3D" id="2.170.150.20">
    <property type="entry name" value="Peptide methionine sulfoxide reductase"/>
    <property type="match status" value="1"/>
</dbReference>
<dbReference type="HAMAP" id="MF_01400">
    <property type="entry name" value="MsrB"/>
    <property type="match status" value="1"/>
</dbReference>
<dbReference type="InterPro" id="IPR028427">
    <property type="entry name" value="Met_Sox_Rdtase_MsrB"/>
</dbReference>
<dbReference type="InterPro" id="IPR002579">
    <property type="entry name" value="Met_Sox_Rdtase_MsrB_dom"/>
</dbReference>
<dbReference type="InterPro" id="IPR011057">
    <property type="entry name" value="Mss4-like_sf"/>
</dbReference>
<dbReference type="NCBIfam" id="TIGR00357">
    <property type="entry name" value="peptide-methionine (R)-S-oxide reductase MsrB"/>
    <property type="match status" value="1"/>
</dbReference>
<dbReference type="PANTHER" id="PTHR10173">
    <property type="entry name" value="METHIONINE SULFOXIDE REDUCTASE"/>
    <property type="match status" value="1"/>
</dbReference>
<dbReference type="PANTHER" id="PTHR10173:SF59">
    <property type="entry name" value="PEPTIDE METHIONINE SULFOXIDE REDUCTASE MSRA_MSRB"/>
    <property type="match status" value="1"/>
</dbReference>
<dbReference type="Pfam" id="PF01641">
    <property type="entry name" value="SelR"/>
    <property type="match status" value="1"/>
</dbReference>
<dbReference type="SUPFAM" id="SSF51316">
    <property type="entry name" value="Mss4-like"/>
    <property type="match status" value="1"/>
</dbReference>
<dbReference type="PROSITE" id="PS51790">
    <property type="entry name" value="MSRB"/>
    <property type="match status" value="1"/>
</dbReference>
<organism>
    <name type="scientific">Streptococcus agalactiae serotype III (strain NEM316)</name>
    <dbReference type="NCBI Taxonomy" id="211110"/>
    <lineage>
        <taxon>Bacteria</taxon>
        <taxon>Bacillati</taxon>
        <taxon>Bacillota</taxon>
        <taxon>Bacilli</taxon>
        <taxon>Lactobacillales</taxon>
        <taxon>Streptococcaceae</taxon>
        <taxon>Streptococcus</taxon>
    </lineage>
</organism>
<evidence type="ECO:0000255" key="1">
    <source>
        <dbReference type="HAMAP-Rule" id="MF_01400"/>
    </source>
</evidence>
<evidence type="ECO:0000255" key="2">
    <source>
        <dbReference type="PROSITE-ProRule" id="PRU01126"/>
    </source>
</evidence>
<sequence length="144" mass="16353">MKETQEELRQRIGHTAYQVTQNSATEHAFTGKYDDFFEEGIYVDIVSGEVLFSSLDKFQSGCGWPAFSKPIENRMVTNHQDHSHGMHRIEVRSRQADSHLGHVFNDGPVDAGGLRYCINSAALDFIPYDQMAKRGYGDYLSLFD</sequence>
<keyword id="KW-0560">Oxidoreductase</keyword>
<protein>
    <recommendedName>
        <fullName evidence="1">Peptide methionine sulfoxide reductase MsrB</fullName>
        <ecNumber evidence="1">1.8.4.12</ecNumber>
    </recommendedName>
    <alternativeName>
        <fullName evidence="1">Peptide-methionine (R)-S-oxide reductase</fullName>
    </alternativeName>
</protein>
<name>MSRB_STRA3</name>
<comment type="catalytic activity">
    <reaction evidence="1">
        <text>L-methionyl-[protein] + [thioredoxin]-disulfide + H2O = L-methionyl-(R)-S-oxide-[protein] + [thioredoxin]-dithiol</text>
        <dbReference type="Rhea" id="RHEA:24164"/>
        <dbReference type="Rhea" id="RHEA-COMP:10698"/>
        <dbReference type="Rhea" id="RHEA-COMP:10700"/>
        <dbReference type="Rhea" id="RHEA-COMP:12313"/>
        <dbReference type="Rhea" id="RHEA-COMP:12314"/>
        <dbReference type="ChEBI" id="CHEBI:15377"/>
        <dbReference type="ChEBI" id="CHEBI:16044"/>
        <dbReference type="ChEBI" id="CHEBI:29950"/>
        <dbReference type="ChEBI" id="CHEBI:45764"/>
        <dbReference type="ChEBI" id="CHEBI:50058"/>
        <dbReference type="EC" id="1.8.4.12"/>
    </reaction>
</comment>
<comment type="similarity">
    <text evidence="1">Belongs to the MsrB Met sulfoxide reductase family.</text>
</comment>
<gene>
    <name evidence="1" type="primary">msrB</name>
    <name type="ordered locus">gbs0921</name>
</gene>
<proteinExistence type="inferred from homology"/>